<proteinExistence type="inferred from homology"/>
<sequence length="96" mass="10213">MNIRPLHDRVIVKRLEVESTSAGGIVLTGSAAEKSTRGEVLAVGNGRILENGTVRPLDVKVGDVVIFNEGYGVKKEKIDGQEVLILSEADLMAIVG</sequence>
<protein>
    <recommendedName>
        <fullName evidence="1">Co-chaperonin GroES</fullName>
    </recommendedName>
    <alternativeName>
        <fullName evidence="1">10 kDa chaperonin</fullName>
    </alternativeName>
    <alternativeName>
        <fullName evidence="1">Chaperonin-10</fullName>
        <shortName evidence="1">Cpn10</shortName>
    </alternativeName>
</protein>
<gene>
    <name evidence="1" type="primary">groES</name>
    <name evidence="1" type="synonym">groS</name>
    <name type="ordered locus">Shewana3_3568</name>
</gene>
<organism>
    <name type="scientific">Shewanella sp. (strain ANA-3)</name>
    <dbReference type="NCBI Taxonomy" id="94122"/>
    <lineage>
        <taxon>Bacteria</taxon>
        <taxon>Pseudomonadati</taxon>
        <taxon>Pseudomonadota</taxon>
        <taxon>Gammaproteobacteria</taxon>
        <taxon>Alteromonadales</taxon>
        <taxon>Shewanellaceae</taxon>
        <taxon>Shewanella</taxon>
    </lineage>
</organism>
<dbReference type="EMBL" id="CP000469">
    <property type="protein sequence ID" value="ABK49790.1"/>
    <property type="molecule type" value="Genomic_DNA"/>
</dbReference>
<dbReference type="RefSeq" id="WP_011071021.1">
    <property type="nucleotide sequence ID" value="NC_008577.1"/>
</dbReference>
<dbReference type="SMR" id="A0L171"/>
<dbReference type="STRING" id="94122.Shewana3_3568"/>
<dbReference type="KEGG" id="shn:Shewana3_3568"/>
<dbReference type="eggNOG" id="COG0234">
    <property type="taxonomic scope" value="Bacteria"/>
</dbReference>
<dbReference type="HOGENOM" id="CLU_132825_1_1_6"/>
<dbReference type="OrthoDB" id="9806791at2"/>
<dbReference type="Proteomes" id="UP000002589">
    <property type="component" value="Chromosome"/>
</dbReference>
<dbReference type="GO" id="GO:0005737">
    <property type="term" value="C:cytoplasm"/>
    <property type="evidence" value="ECO:0007669"/>
    <property type="project" value="UniProtKB-SubCell"/>
</dbReference>
<dbReference type="GO" id="GO:0005524">
    <property type="term" value="F:ATP binding"/>
    <property type="evidence" value="ECO:0007669"/>
    <property type="project" value="InterPro"/>
</dbReference>
<dbReference type="GO" id="GO:0046872">
    <property type="term" value="F:metal ion binding"/>
    <property type="evidence" value="ECO:0007669"/>
    <property type="project" value="TreeGrafter"/>
</dbReference>
<dbReference type="GO" id="GO:0044183">
    <property type="term" value="F:protein folding chaperone"/>
    <property type="evidence" value="ECO:0007669"/>
    <property type="project" value="InterPro"/>
</dbReference>
<dbReference type="GO" id="GO:0051087">
    <property type="term" value="F:protein-folding chaperone binding"/>
    <property type="evidence" value="ECO:0007669"/>
    <property type="project" value="TreeGrafter"/>
</dbReference>
<dbReference type="GO" id="GO:0051082">
    <property type="term" value="F:unfolded protein binding"/>
    <property type="evidence" value="ECO:0007669"/>
    <property type="project" value="TreeGrafter"/>
</dbReference>
<dbReference type="GO" id="GO:0051085">
    <property type="term" value="P:chaperone cofactor-dependent protein refolding"/>
    <property type="evidence" value="ECO:0007669"/>
    <property type="project" value="TreeGrafter"/>
</dbReference>
<dbReference type="CDD" id="cd00320">
    <property type="entry name" value="cpn10"/>
    <property type="match status" value="1"/>
</dbReference>
<dbReference type="FunFam" id="2.30.33.40:FF:000001">
    <property type="entry name" value="10 kDa chaperonin"/>
    <property type="match status" value="1"/>
</dbReference>
<dbReference type="Gene3D" id="2.30.33.40">
    <property type="entry name" value="GroES chaperonin"/>
    <property type="match status" value="1"/>
</dbReference>
<dbReference type="HAMAP" id="MF_00580">
    <property type="entry name" value="CH10"/>
    <property type="match status" value="1"/>
</dbReference>
<dbReference type="InterPro" id="IPR020818">
    <property type="entry name" value="Chaperonin_GroES"/>
</dbReference>
<dbReference type="InterPro" id="IPR037124">
    <property type="entry name" value="Chaperonin_GroES_sf"/>
</dbReference>
<dbReference type="InterPro" id="IPR018369">
    <property type="entry name" value="Chaprnonin_Cpn10_CS"/>
</dbReference>
<dbReference type="InterPro" id="IPR011032">
    <property type="entry name" value="GroES-like_sf"/>
</dbReference>
<dbReference type="NCBIfam" id="NF001526">
    <property type="entry name" value="PRK00364.1-1"/>
    <property type="match status" value="1"/>
</dbReference>
<dbReference type="NCBIfam" id="NF001527">
    <property type="entry name" value="PRK00364.1-2"/>
    <property type="match status" value="1"/>
</dbReference>
<dbReference type="NCBIfam" id="NF001531">
    <property type="entry name" value="PRK00364.2-2"/>
    <property type="match status" value="1"/>
</dbReference>
<dbReference type="PANTHER" id="PTHR10772">
    <property type="entry name" value="10 KDA HEAT SHOCK PROTEIN"/>
    <property type="match status" value="1"/>
</dbReference>
<dbReference type="PANTHER" id="PTHR10772:SF58">
    <property type="entry name" value="CO-CHAPERONIN GROES"/>
    <property type="match status" value="1"/>
</dbReference>
<dbReference type="Pfam" id="PF00166">
    <property type="entry name" value="Cpn10"/>
    <property type="match status" value="1"/>
</dbReference>
<dbReference type="PRINTS" id="PR00297">
    <property type="entry name" value="CHAPERONIN10"/>
</dbReference>
<dbReference type="SMART" id="SM00883">
    <property type="entry name" value="Cpn10"/>
    <property type="match status" value="1"/>
</dbReference>
<dbReference type="SUPFAM" id="SSF50129">
    <property type="entry name" value="GroES-like"/>
    <property type="match status" value="1"/>
</dbReference>
<dbReference type="PROSITE" id="PS00681">
    <property type="entry name" value="CHAPERONINS_CPN10"/>
    <property type="match status" value="1"/>
</dbReference>
<accession>A0L171</accession>
<feature type="chain" id="PRO_1000025365" description="Co-chaperonin GroES">
    <location>
        <begin position="1"/>
        <end position="96"/>
    </location>
</feature>
<evidence type="ECO:0000255" key="1">
    <source>
        <dbReference type="HAMAP-Rule" id="MF_00580"/>
    </source>
</evidence>
<reference key="1">
    <citation type="submission" date="2006-09" db="EMBL/GenBank/DDBJ databases">
        <title>Complete sequence of chromosome 1 of Shewanella sp. ANA-3.</title>
        <authorList>
            <person name="Copeland A."/>
            <person name="Lucas S."/>
            <person name="Lapidus A."/>
            <person name="Barry K."/>
            <person name="Detter J.C."/>
            <person name="Glavina del Rio T."/>
            <person name="Hammon N."/>
            <person name="Israni S."/>
            <person name="Dalin E."/>
            <person name="Tice H."/>
            <person name="Pitluck S."/>
            <person name="Chertkov O."/>
            <person name="Brettin T."/>
            <person name="Bruce D."/>
            <person name="Han C."/>
            <person name="Tapia R."/>
            <person name="Gilna P."/>
            <person name="Schmutz J."/>
            <person name="Larimer F."/>
            <person name="Land M."/>
            <person name="Hauser L."/>
            <person name="Kyrpides N."/>
            <person name="Kim E."/>
            <person name="Newman D."/>
            <person name="Salticov C."/>
            <person name="Konstantinidis K."/>
            <person name="Klappenback J."/>
            <person name="Tiedje J."/>
            <person name="Richardson P."/>
        </authorList>
    </citation>
    <scope>NUCLEOTIDE SEQUENCE [LARGE SCALE GENOMIC DNA]</scope>
    <source>
        <strain>ANA-3</strain>
    </source>
</reference>
<keyword id="KW-0143">Chaperone</keyword>
<keyword id="KW-0963">Cytoplasm</keyword>
<comment type="function">
    <text evidence="1">Together with the chaperonin GroEL, plays an essential role in assisting protein folding. The GroEL-GroES system forms a nano-cage that allows encapsulation of the non-native substrate proteins and provides a physical environment optimized to promote and accelerate protein folding. GroES binds to the apical surface of the GroEL ring, thereby capping the opening of the GroEL channel.</text>
</comment>
<comment type="subunit">
    <text evidence="1">Heptamer of 7 subunits arranged in a ring. Interacts with the chaperonin GroEL.</text>
</comment>
<comment type="subcellular location">
    <subcellularLocation>
        <location evidence="1">Cytoplasm</location>
    </subcellularLocation>
</comment>
<comment type="similarity">
    <text evidence="1">Belongs to the GroES chaperonin family.</text>
</comment>
<name>CH10_SHESA</name>